<reference key="1">
    <citation type="journal article" date="2006" name="Plant Cell Rep.">
        <title>The complete chloroplast genome sequences of Solanum tuberosum and comparative analysis with Solanaceae species identified the presence of a 241-bp deletion in cultivated potato chloroplast DNA sequence.</title>
        <authorList>
            <person name="Chung H.-J."/>
            <person name="Jung J.D."/>
            <person name="Park H.-W."/>
            <person name="Kim J.-H."/>
            <person name="Cha H.W."/>
            <person name="Min S.R."/>
            <person name="Jeong W.-J."/>
            <person name="Liu J.R."/>
        </authorList>
    </citation>
    <scope>NUCLEOTIDE SEQUENCE [LARGE SCALE GENOMIC DNA]</scope>
    <source>
        <strain>cv. Desiree</strain>
    </source>
</reference>
<reference key="2">
    <citation type="submission" date="2006-02" db="EMBL/GenBank/DDBJ databases">
        <title>Complete chloroplast genome sequences of Solanum tuberosum cultivar Desiree and comparative analyses with other Solanaceae genomes.</title>
        <authorList>
            <person name="Gargano D."/>
            <person name="Scotti N."/>
            <person name="Vezzi A."/>
            <person name="Bilardi A."/>
            <person name="Valle G."/>
            <person name="Grillo S."/>
            <person name="Cardi T."/>
        </authorList>
    </citation>
    <scope>NUCLEOTIDE SEQUENCE [LARGE SCALE GENOMIC DNA]</scope>
    <source>
        <strain>cv. Desiree</strain>
    </source>
</reference>
<comment type="function">
    <text evidence="1">Contributes to K(+)/H(+) antiport activity by supporting proton efflux to control proton extrusion and homeostasis in chloroplasts in a light-dependent manner to modulate photosynthesis. Prevents excessive induction of non-photochemical quenching (NPQ) under continuous-light conditions. Indirectly promotes efficient inorganic carbon uptake into chloroplasts.</text>
</comment>
<comment type="catalytic activity">
    <reaction evidence="1">
        <text>K(+)(in) + H(+)(out) = K(+)(out) + H(+)(in)</text>
        <dbReference type="Rhea" id="RHEA:29467"/>
        <dbReference type="ChEBI" id="CHEBI:15378"/>
        <dbReference type="ChEBI" id="CHEBI:29103"/>
    </reaction>
</comment>
<comment type="subcellular location">
    <subcellularLocation>
        <location evidence="1">Plastid</location>
        <location evidence="1">Chloroplast inner membrane</location>
        <topology evidence="1">Multi-pass membrane protein</topology>
    </subcellularLocation>
</comment>
<comment type="similarity">
    <text evidence="1 2">Belongs to the CemA family.</text>
</comment>
<geneLocation type="chloroplast"/>
<name>CEMA_SOLTU</name>
<dbReference type="EMBL" id="DQ231562">
    <property type="protein sequence ID" value="ABB90053.1"/>
    <property type="molecule type" value="Genomic_DNA"/>
</dbReference>
<dbReference type="EMBL" id="DQ386163">
    <property type="protein sequence ID" value="ABD47069.1"/>
    <property type="molecule type" value="Genomic_DNA"/>
</dbReference>
<dbReference type="RefSeq" id="YP_635651.1">
    <property type="nucleotide sequence ID" value="NC_008096.2"/>
</dbReference>
<dbReference type="FunCoup" id="Q2VEG5">
    <property type="interactions" value="54"/>
</dbReference>
<dbReference type="STRING" id="4113.Q2VEG5"/>
<dbReference type="GeneID" id="4099989"/>
<dbReference type="KEGG" id="sot:4099989"/>
<dbReference type="InParanoid" id="Q2VEG5"/>
<dbReference type="OrthoDB" id="993at2759"/>
<dbReference type="Proteomes" id="UP000011115">
    <property type="component" value="Unassembled WGS sequence"/>
</dbReference>
<dbReference type="GO" id="GO:0009706">
    <property type="term" value="C:chloroplast inner membrane"/>
    <property type="evidence" value="ECO:0007669"/>
    <property type="project" value="UniProtKB-SubCell"/>
</dbReference>
<dbReference type="GO" id="GO:0015297">
    <property type="term" value="F:antiporter activity"/>
    <property type="evidence" value="ECO:0007669"/>
    <property type="project" value="UniProtKB-KW"/>
</dbReference>
<dbReference type="GO" id="GO:0015078">
    <property type="term" value="F:proton transmembrane transporter activity"/>
    <property type="evidence" value="ECO:0007669"/>
    <property type="project" value="UniProtKB-UniRule"/>
</dbReference>
<dbReference type="GO" id="GO:0006813">
    <property type="term" value="P:potassium ion transport"/>
    <property type="evidence" value="ECO:0007669"/>
    <property type="project" value="UniProtKB-UniRule"/>
</dbReference>
<dbReference type="HAMAP" id="MF_01308">
    <property type="entry name" value="CemA_PxcA"/>
    <property type="match status" value="1"/>
</dbReference>
<dbReference type="InterPro" id="IPR004282">
    <property type="entry name" value="CemA"/>
</dbReference>
<dbReference type="PANTHER" id="PTHR33650:SF2">
    <property type="entry name" value="CHLOROPLAST ENVELOPE MEMBRANE PROTEIN"/>
    <property type="match status" value="1"/>
</dbReference>
<dbReference type="PANTHER" id="PTHR33650">
    <property type="entry name" value="CHLOROPLAST ENVELOPE MEMBRANE PROTEIN-RELATED"/>
    <property type="match status" value="1"/>
</dbReference>
<dbReference type="Pfam" id="PF03040">
    <property type="entry name" value="CemA"/>
    <property type="match status" value="1"/>
</dbReference>
<keyword id="KW-0050">Antiport</keyword>
<keyword id="KW-0150">Chloroplast</keyword>
<keyword id="KW-0375">Hydrogen ion transport</keyword>
<keyword id="KW-0406">Ion transport</keyword>
<keyword id="KW-0472">Membrane</keyword>
<keyword id="KW-0934">Plastid</keyword>
<keyword id="KW-1001">Plastid inner membrane</keyword>
<keyword id="KW-0630">Potassium</keyword>
<keyword id="KW-0633">Potassium transport</keyword>
<keyword id="KW-1185">Reference proteome</keyword>
<keyword id="KW-0812">Transmembrane</keyword>
<keyword id="KW-1133">Transmembrane helix</keyword>
<keyword id="KW-0813">Transport</keyword>
<gene>
    <name evidence="1" type="primary">cemA</name>
</gene>
<accession>Q2VEG5</accession>
<sequence length="229" mass="26748">MAKKKAFTPLFYLASIVFLPWWISFSVNKCLESWVTNWWNTGQSQIVLNNIQEKSLLEKFRELEELLFLDEMIKEYSETHLEEFGIGIHKETIQLITIQNENRMDTILHFSTNIIWFGILSGYSILGKEKLVILNSWAQEFLYNLSDTAKALCLLLVTEFFLGYHSPPGWEFAIRSIYNEVGVVANEQTITILVCILPVIFDTCFKYWLFRYLTSLSPSILLIYDSITE</sequence>
<protein>
    <recommendedName>
        <fullName evidence="1">Potassium/proton antiporter CemA</fullName>
    </recommendedName>
    <alternativeName>
        <fullName evidence="1">Chloroplast envelope membrane protein A</fullName>
        <shortName evidence="1">CemA</shortName>
    </alternativeName>
</protein>
<proteinExistence type="inferred from homology"/>
<organism>
    <name type="scientific">Solanum tuberosum</name>
    <name type="common">Potato</name>
    <dbReference type="NCBI Taxonomy" id="4113"/>
    <lineage>
        <taxon>Eukaryota</taxon>
        <taxon>Viridiplantae</taxon>
        <taxon>Streptophyta</taxon>
        <taxon>Embryophyta</taxon>
        <taxon>Tracheophyta</taxon>
        <taxon>Spermatophyta</taxon>
        <taxon>Magnoliopsida</taxon>
        <taxon>eudicotyledons</taxon>
        <taxon>Gunneridae</taxon>
        <taxon>Pentapetalae</taxon>
        <taxon>asterids</taxon>
        <taxon>lamiids</taxon>
        <taxon>Solanales</taxon>
        <taxon>Solanaceae</taxon>
        <taxon>Solanoideae</taxon>
        <taxon>Solaneae</taxon>
        <taxon>Solanum</taxon>
    </lineage>
</organism>
<feature type="chain" id="PRO_0000277579" description="Potassium/proton antiporter CemA">
    <location>
        <begin position="1"/>
        <end position="229"/>
    </location>
</feature>
<feature type="transmembrane region" description="Helical" evidence="1">
    <location>
        <begin position="7"/>
        <end position="27"/>
    </location>
</feature>
<feature type="transmembrane region" description="Helical" evidence="1">
    <location>
        <begin position="107"/>
        <end position="127"/>
    </location>
</feature>
<evidence type="ECO:0000255" key="1">
    <source>
        <dbReference type="HAMAP-Rule" id="MF_01308"/>
    </source>
</evidence>
<evidence type="ECO:0000305" key="2"/>